<keyword id="KW-0963">Cytoplasm</keyword>
<keyword id="KW-1185">Reference proteome</keyword>
<keyword id="KW-0704">Schiff base</keyword>
<keyword id="KW-0784">Thiamine biosynthesis</keyword>
<keyword id="KW-0808">Transferase</keyword>
<dbReference type="EC" id="2.8.1.10" evidence="1"/>
<dbReference type="EMBL" id="BX248354">
    <property type="protein sequence ID" value="CAE48545.1"/>
    <property type="molecule type" value="Genomic_DNA"/>
</dbReference>
<dbReference type="RefSeq" id="WP_010933965.1">
    <property type="nucleotide sequence ID" value="NC_002935.2"/>
</dbReference>
<dbReference type="SMR" id="Q6NKI6"/>
<dbReference type="STRING" id="257309.DIP0033"/>
<dbReference type="KEGG" id="cdi:DIP0033"/>
<dbReference type="HOGENOM" id="CLU_062233_1_0_11"/>
<dbReference type="UniPathway" id="UPA00060"/>
<dbReference type="Proteomes" id="UP000002198">
    <property type="component" value="Chromosome"/>
</dbReference>
<dbReference type="GO" id="GO:0005737">
    <property type="term" value="C:cytoplasm"/>
    <property type="evidence" value="ECO:0007669"/>
    <property type="project" value="UniProtKB-SubCell"/>
</dbReference>
<dbReference type="GO" id="GO:1990107">
    <property type="term" value="F:thiazole synthase activity"/>
    <property type="evidence" value="ECO:0007669"/>
    <property type="project" value="UniProtKB-EC"/>
</dbReference>
<dbReference type="GO" id="GO:0009229">
    <property type="term" value="P:thiamine diphosphate biosynthetic process"/>
    <property type="evidence" value="ECO:0007669"/>
    <property type="project" value="UniProtKB-UniRule"/>
</dbReference>
<dbReference type="CDD" id="cd04728">
    <property type="entry name" value="ThiG"/>
    <property type="match status" value="1"/>
</dbReference>
<dbReference type="Gene3D" id="3.20.20.70">
    <property type="entry name" value="Aldolase class I"/>
    <property type="match status" value="1"/>
</dbReference>
<dbReference type="HAMAP" id="MF_00443">
    <property type="entry name" value="ThiG"/>
    <property type="match status" value="1"/>
</dbReference>
<dbReference type="InterPro" id="IPR013785">
    <property type="entry name" value="Aldolase_TIM"/>
</dbReference>
<dbReference type="InterPro" id="IPR033983">
    <property type="entry name" value="Thiazole_synthase_ThiG"/>
</dbReference>
<dbReference type="InterPro" id="IPR008867">
    <property type="entry name" value="ThiG"/>
</dbReference>
<dbReference type="PANTHER" id="PTHR34266">
    <property type="entry name" value="THIAZOLE SYNTHASE"/>
    <property type="match status" value="1"/>
</dbReference>
<dbReference type="PANTHER" id="PTHR34266:SF2">
    <property type="entry name" value="THIAZOLE SYNTHASE"/>
    <property type="match status" value="1"/>
</dbReference>
<dbReference type="Pfam" id="PF05690">
    <property type="entry name" value="ThiG"/>
    <property type="match status" value="1"/>
</dbReference>
<dbReference type="SUPFAM" id="SSF110399">
    <property type="entry name" value="ThiG-like"/>
    <property type="match status" value="1"/>
</dbReference>
<reference key="1">
    <citation type="journal article" date="2003" name="Nucleic Acids Res.">
        <title>The complete genome sequence and analysis of Corynebacterium diphtheriae NCTC13129.</title>
        <authorList>
            <person name="Cerdeno-Tarraga A.-M."/>
            <person name="Efstratiou A."/>
            <person name="Dover L.G."/>
            <person name="Holden M.T.G."/>
            <person name="Pallen M.J."/>
            <person name="Bentley S.D."/>
            <person name="Besra G.S."/>
            <person name="Churcher C.M."/>
            <person name="James K.D."/>
            <person name="De Zoysa A."/>
            <person name="Chillingworth T."/>
            <person name="Cronin A."/>
            <person name="Dowd L."/>
            <person name="Feltwell T."/>
            <person name="Hamlin N."/>
            <person name="Holroyd S."/>
            <person name="Jagels K."/>
            <person name="Moule S."/>
            <person name="Quail M.A."/>
            <person name="Rabbinowitsch E."/>
            <person name="Rutherford K.M."/>
            <person name="Thomson N.R."/>
            <person name="Unwin L."/>
            <person name="Whitehead S."/>
            <person name="Barrell B.G."/>
            <person name="Parkhill J."/>
        </authorList>
    </citation>
    <scope>NUCLEOTIDE SEQUENCE [LARGE SCALE GENOMIC DNA]</scope>
    <source>
        <strain>ATCC 700971 / NCTC 13129 / Biotype gravis</strain>
    </source>
</reference>
<sequence length="261" mass="27369">MLTIADRSFQSHLIMGTGGASSFDTLEKSLIASGTELTTVAMRRHAAHTGAHGESVFELMQRLNITPLPNTAGCRTARDAILTAQLAREALDTSWIKVEVIADDTTLLPDVLELIDATETLTNDGFTVLAYTSDDPVVAQRLEDAGAAAVMPLGSPIGTGLGILNPHNIELICSRATVPVLLDAGIGTASDATLAMELGCSGVLLASAINRCINPITMATAMKHAVEAGRLAREAGRIPRREHAVASSSFEGLASWADEVL</sequence>
<comment type="function">
    <text evidence="1">Catalyzes the rearrangement of 1-deoxy-D-xylulose 5-phosphate (DXP) to produce the thiazole phosphate moiety of thiamine. Sulfur is provided by the thiocarboxylate moiety of the carrier protein ThiS. In vitro, sulfur can be provided by H(2)S.</text>
</comment>
<comment type="catalytic activity">
    <reaction evidence="1">
        <text>[ThiS sulfur-carrier protein]-C-terminal-Gly-aminoethanethioate + 2-iminoacetate + 1-deoxy-D-xylulose 5-phosphate = [ThiS sulfur-carrier protein]-C-terminal Gly-Gly + 2-[(2R,5Z)-2-carboxy-4-methylthiazol-5(2H)-ylidene]ethyl phosphate + 2 H2O + H(+)</text>
        <dbReference type="Rhea" id="RHEA:26297"/>
        <dbReference type="Rhea" id="RHEA-COMP:12909"/>
        <dbReference type="Rhea" id="RHEA-COMP:19908"/>
        <dbReference type="ChEBI" id="CHEBI:15377"/>
        <dbReference type="ChEBI" id="CHEBI:15378"/>
        <dbReference type="ChEBI" id="CHEBI:57792"/>
        <dbReference type="ChEBI" id="CHEBI:62899"/>
        <dbReference type="ChEBI" id="CHEBI:77846"/>
        <dbReference type="ChEBI" id="CHEBI:90778"/>
        <dbReference type="ChEBI" id="CHEBI:232372"/>
        <dbReference type="EC" id="2.8.1.10"/>
    </reaction>
</comment>
<comment type="pathway">
    <text evidence="1">Cofactor biosynthesis; thiamine diphosphate biosynthesis.</text>
</comment>
<comment type="subunit">
    <text evidence="1">Homotetramer. Forms heterodimers with either ThiH or ThiS.</text>
</comment>
<comment type="subcellular location">
    <subcellularLocation>
        <location evidence="1">Cytoplasm</location>
    </subcellularLocation>
</comment>
<comment type="similarity">
    <text evidence="1">Belongs to the ThiG family.</text>
</comment>
<organism>
    <name type="scientific">Corynebacterium diphtheriae (strain ATCC 700971 / NCTC 13129 / Biotype gravis)</name>
    <dbReference type="NCBI Taxonomy" id="257309"/>
    <lineage>
        <taxon>Bacteria</taxon>
        <taxon>Bacillati</taxon>
        <taxon>Actinomycetota</taxon>
        <taxon>Actinomycetes</taxon>
        <taxon>Mycobacteriales</taxon>
        <taxon>Corynebacteriaceae</taxon>
        <taxon>Corynebacterium</taxon>
    </lineage>
</organism>
<accession>Q6NKI6</accession>
<feature type="chain" id="PRO_0000162809" description="Thiazole synthase">
    <location>
        <begin position="1"/>
        <end position="261"/>
    </location>
</feature>
<feature type="active site" description="Schiff-base intermediate with DXP" evidence="1">
    <location>
        <position position="97"/>
    </location>
</feature>
<feature type="binding site" evidence="1">
    <location>
        <position position="158"/>
    </location>
    <ligand>
        <name>1-deoxy-D-xylulose 5-phosphate</name>
        <dbReference type="ChEBI" id="CHEBI:57792"/>
    </ligand>
</feature>
<feature type="binding site" evidence="1">
    <location>
        <begin position="184"/>
        <end position="185"/>
    </location>
    <ligand>
        <name>1-deoxy-D-xylulose 5-phosphate</name>
        <dbReference type="ChEBI" id="CHEBI:57792"/>
    </ligand>
</feature>
<feature type="binding site" evidence="1">
    <location>
        <begin position="206"/>
        <end position="207"/>
    </location>
    <ligand>
        <name>1-deoxy-D-xylulose 5-phosphate</name>
        <dbReference type="ChEBI" id="CHEBI:57792"/>
    </ligand>
</feature>
<name>THIG_CORDI</name>
<proteinExistence type="inferred from homology"/>
<protein>
    <recommendedName>
        <fullName evidence="1">Thiazole synthase</fullName>
        <ecNumber evidence="1">2.8.1.10</ecNumber>
    </recommendedName>
</protein>
<gene>
    <name evidence="1" type="primary">thiG</name>
    <name type="ordered locus">DIP0033</name>
</gene>
<evidence type="ECO:0000255" key="1">
    <source>
        <dbReference type="HAMAP-Rule" id="MF_00443"/>
    </source>
</evidence>